<protein>
    <recommendedName>
        <fullName>S-adenosylmethionine:tRNA ribosyltransferase-isomerase</fullName>
        <ecNumber>2.4.99.17</ecNumber>
    </recommendedName>
    <alternativeName>
        <fullName>Queuosine biosynthesis protein QueA</fullName>
    </alternativeName>
</protein>
<organism>
    <name type="scientific">Streptococcus gordonii (strain Challis / ATCC 35105 / BCRC 15272 / CH1 / DL1 / V288)</name>
    <dbReference type="NCBI Taxonomy" id="467705"/>
    <lineage>
        <taxon>Bacteria</taxon>
        <taxon>Bacillati</taxon>
        <taxon>Bacillota</taxon>
        <taxon>Bacilli</taxon>
        <taxon>Lactobacillales</taxon>
        <taxon>Streptococcaceae</taxon>
        <taxon>Streptococcus</taxon>
    </lineage>
</organism>
<accession>A8AYK5</accession>
<feature type="chain" id="PRO_0000418335" description="S-adenosylmethionine:tRNA ribosyltransferase-isomerase">
    <location>
        <begin position="1"/>
        <end position="342"/>
    </location>
</feature>
<gene>
    <name type="primary">queA</name>
    <name type="ordered locus">SGO_1587</name>
</gene>
<reference key="1">
    <citation type="journal article" date="2007" name="J. Bacteriol.">
        <title>Genome-wide transcriptional changes in Streptococcus gordonii in response to competence signaling peptide.</title>
        <authorList>
            <person name="Vickerman M.M."/>
            <person name="Iobst S."/>
            <person name="Jesionowski A.M."/>
            <person name="Gill S.R."/>
        </authorList>
    </citation>
    <scope>NUCLEOTIDE SEQUENCE [LARGE SCALE GENOMIC DNA]</scope>
    <source>
        <strain>Challis / ATCC 35105 / BCRC 15272 / CH1 / DL1 / V288</strain>
    </source>
</reference>
<reference key="2">
    <citation type="journal article" date="2008" name="Appl. Environ. Microbiol.">
        <title>Environmental and growth phase regulation of the Streptococcus gordonii arginine deiminase genes.</title>
        <authorList>
            <person name="Liu Y."/>
            <person name="Dong Y."/>
            <person name="Chen Y.Y."/>
            <person name="Burne R.A."/>
        </authorList>
    </citation>
    <scope>FUNCTION</scope>
    <scope>INDUCTION</scope>
    <scope>TRANSCRIPTIONAL REGULATION</scope>
    <scope>OPERON STRUCTURE</scope>
    <scope>DISRUPTION PHENOTYPE</scope>
    <source>
        <strain>Challis / ATCC 35105 / BCRC 15272 / CH1 / DL1 / V288</strain>
    </source>
</reference>
<dbReference type="EC" id="2.4.99.17"/>
<dbReference type="EMBL" id="CP000725">
    <property type="protein sequence ID" value="ABV09920.1"/>
    <property type="molecule type" value="Genomic_DNA"/>
</dbReference>
<dbReference type="RefSeq" id="WP_012130652.1">
    <property type="nucleotide sequence ID" value="NC_009785.1"/>
</dbReference>
<dbReference type="SMR" id="A8AYK5"/>
<dbReference type="STRING" id="467705.SGO_1587"/>
<dbReference type="KEGG" id="sgo:SGO_1587"/>
<dbReference type="eggNOG" id="COG0809">
    <property type="taxonomic scope" value="Bacteria"/>
</dbReference>
<dbReference type="HOGENOM" id="CLU_039110_1_0_9"/>
<dbReference type="UniPathway" id="UPA00392"/>
<dbReference type="Proteomes" id="UP000001131">
    <property type="component" value="Chromosome"/>
</dbReference>
<dbReference type="GO" id="GO:0005737">
    <property type="term" value="C:cytoplasm"/>
    <property type="evidence" value="ECO:0007669"/>
    <property type="project" value="UniProtKB-SubCell"/>
</dbReference>
<dbReference type="GO" id="GO:0051075">
    <property type="term" value="F:S-adenosylmethionine:tRNA ribosyltransferase-isomerase activity"/>
    <property type="evidence" value="ECO:0007669"/>
    <property type="project" value="UniProtKB-EC"/>
</dbReference>
<dbReference type="GO" id="GO:0008616">
    <property type="term" value="P:queuosine biosynthetic process"/>
    <property type="evidence" value="ECO:0007669"/>
    <property type="project" value="UniProtKB-UniRule"/>
</dbReference>
<dbReference type="GO" id="GO:0002099">
    <property type="term" value="P:tRNA wobble guanine modification"/>
    <property type="evidence" value="ECO:0007669"/>
    <property type="project" value="TreeGrafter"/>
</dbReference>
<dbReference type="FunFam" id="2.40.10.240:FF:000002">
    <property type="entry name" value="S-adenosylmethionine:tRNA ribosyltransferase-isomerase"/>
    <property type="match status" value="1"/>
</dbReference>
<dbReference type="FunFam" id="3.40.1780.10:FF:000001">
    <property type="entry name" value="S-adenosylmethionine:tRNA ribosyltransferase-isomerase"/>
    <property type="match status" value="1"/>
</dbReference>
<dbReference type="Gene3D" id="2.40.10.240">
    <property type="entry name" value="QueA-like"/>
    <property type="match status" value="1"/>
</dbReference>
<dbReference type="Gene3D" id="3.40.1780.10">
    <property type="entry name" value="QueA-like"/>
    <property type="match status" value="1"/>
</dbReference>
<dbReference type="HAMAP" id="MF_00113">
    <property type="entry name" value="QueA"/>
    <property type="match status" value="1"/>
</dbReference>
<dbReference type="InterPro" id="IPR003699">
    <property type="entry name" value="QueA"/>
</dbReference>
<dbReference type="InterPro" id="IPR042118">
    <property type="entry name" value="QueA_dom1"/>
</dbReference>
<dbReference type="InterPro" id="IPR042119">
    <property type="entry name" value="QueA_dom2"/>
</dbReference>
<dbReference type="InterPro" id="IPR036100">
    <property type="entry name" value="QueA_sf"/>
</dbReference>
<dbReference type="NCBIfam" id="NF001140">
    <property type="entry name" value="PRK00147.1"/>
    <property type="match status" value="1"/>
</dbReference>
<dbReference type="NCBIfam" id="TIGR00113">
    <property type="entry name" value="queA"/>
    <property type="match status" value="1"/>
</dbReference>
<dbReference type="PANTHER" id="PTHR30307">
    <property type="entry name" value="S-ADENOSYLMETHIONINE:TRNA RIBOSYLTRANSFERASE-ISOMERASE"/>
    <property type="match status" value="1"/>
</dbReference>
<dbReference type="PANTHER" id="PTHR30307:SF0">
    <property type="entry name" value="S-ADENOSYLMETHIONINE:TRNA RIBOSYLTRANSFERASE-ISOMERASE"/>
    <property type="match status" value="1"/>
</dbReference>
<dbReference type="Pfam" id="PF02547">
    <property type="entry name" value="Queuosine_synth"/>
    <property type="match status" value="1"/>
</dbReference>
<dbReference type="SUPFAM" id="SSF111337">
    <property type="entry name" value="QueA-like"/>
    <property type="match status" value="1"/>
</dbReference>
<sequence length="342" mass="38138">MNTADFDFHLPEELIAQTPLEKRDASRLLVVDRSSGEFSDQHFDSIIDQLQPGDALVMNNTRVLPARLYGEKPGTGGHVELLLLKNTEGDQWEVLAKPAKRLKVGAQVSFGDGRLTATVVDELEHGGRIVRFDYQGIFLEVLESLGEMPLPPYIHEKLADRERYQTVYAKENGSAAAPTAGLHFTKELLAQIEAKGVKLVYLTLHVGLGTFRPVSVDNLDDHEMHSEFYTLSEEAAATLREVKANGHRVIAVGTTSIRTLETIGNKFKGDIQADSGWTNIFIKPGYQWQIVDAFSTNFHLPKSTLVMLVSAFAGRDLTLKAYEHAIAERYRFFSFGDAMFIK</sequence>
<name>QUEA_STRGC</name>
<keyword id="KW-0963">Cytoplasm</keyword>
<keyword id="KW-0671">Queuosine biosynthesis</keyword>
<keyword id="KW-1185">Reference proteome</keyword>
<keyword id="KW-0949">S-adenosyl-L-methionine</keyword>
<keyword id="KW-0808">Transferase</keyword>
<comment type="function">
    <text evidence="1 2">Transfers and isomerizes the ribose moiety from AdoMet to the 7-aminomethyl group of 7-deazaguanine (preQ1-tRNA) to give epoxyqueuosine (oQ-tRNA) (By similarity). Seems to have a role in modulation of ADS (arginine deiminase system) gene expression, perhaps exerting a negative effect on the translation of arc regulatory proteins.</text>
</comment>
<comment type="catalytic activity">
    <reaction>
        <text>7-aminomethyl-7-carbaguanosine(34) in tRNA + S-adenosyl-L-methionine = epoxyqueuosine(34) in tRNA + adenine + L-methionine + 2 H(+)</text>
        <dbReference type="Rhea" id="RHEA:32155"/>
        <dbReference type="Rhea" id="RHEA-COMP:10342"/>
        <dbReference type="Rhea" id="RHEA-COMP:18582"/>
        <dbReference type="ChEBI" id="CHEBI:15378"/>
        <dbReference type="ChEBI" id="CHEBI:16708"/>
        <dbReference type="ChEBI" id="CHEBI:57844"/>
        <dbReference type="ChEBI" id="CHEBI:59789"/>
        <dbReference type="ChEBI" id="CHEBI:82833"/>
        <dbReference type="ChEBI" id="CHEBI:194443"/>
        <dbReference type="EC" id="2.4.99.17"/>
    </reaction>
</comment>
<comment type="pathway">
    <text>tRNA modification; tRNA-queuosine biosynthesis.</text>
</comment>
<comment type="subunit">
    <text evidence="1">Monomer.</text>
</comment>
<comment type="subcellular location">
    <subcellularLocation>
        <location evidence="1">Cytoplasm</location>
    </subcellularLocation>
</comment>
<comment type="induction">
    <text evidence="2">Is constitutively expressed in the different growth phases. Its transcription is not subject to carbon catabolite repression (CCR), and is not affected by arginine or low pH. Is cotranscribed with arcR.</text>
</comment>
<comment type="disruption phenotype">
    <text evidence="2">The arcA transcript in QueA-deficient strains is 14-fold more abundant than in the wild-type strain. However, no significant difference in arginine deiminase (AD) activity (encoded by arcA) is detected between the wild-type and QueA-deficient strains. The growth rate of a QueA-deficient strain does not differ significantly from that of the wild-type strain, but the QueA-deficient strain does not compete well with the wild-type during serial passage.</text>
</comment>
<comment type="similarity">
    <text evidence="3">Belongs to the QueA family.</text>
</comment>
<evidence type="ECO:0000250" key="1"/>
<evidence type="ECO:0000269" key="2">
    <source>
    </source>
</evidence>
<evidence type="ECO:0000305" key="3"/>
<proteinExistence type="evidence at transcript level"/>